<organism>
    <name type="scientific">Plasmodium falciparum</name>
    <dbReference type="NCBI Taxonomy" id="5833"/>
    <lineage>
        <taxon>Eukaryota</taxon>
        <taxon>Sar</taxon>
        <taxon>Alveolata</taxon>
        <taxon>Apicomplexa</taxon>
        <taxon>Aconoidasida</taxon>
        <taxon>Haemosporida</taxon>
        <taxon>Plasmodiidae</taxon>
        <taxon>Plasmodium</taxon>
        <taxon>Plasmodium (Laverania)</taxon>
    </lineage>
</organism>
<accession>Q9TW89</accession>
<accession>Q9TVN6</accession>
<accession>Q9U524</accession>
<accession>Q9U525</accession>
<accession>Q9U526</accession>
<accession>Q9U527</accession>
<accession>Q9U528</accession>
<accession>Q9U529</accession>
<accession>Q9U530</accession>
<dbReference type="EC" id="1.15.1.1"/>
<dbReference type="EMBL" id="AF113142">
    <property type="protein sequence ID" value="AAD03746.1"/>
    <property type="molecule type" value="Genomic_DNA"/>
</dbReference>
<dbReference type="EMBL" id="AF113143">
    <property type="protein sequence ID" value="AAD03747.1"/>
    <property type="molecule type" value="Genomic_DNA"/>
</dbReference>
<dbReference type="EMBL" id="AF113144">
    <property type="protein sequence ID" value="AAD03748.1"/>
    <property type="molecule type" value="Genomic_DNA"/>
</dbReference>
<dbReference type="EMBL" id="AF113145">
    <property type="protein sequence ID" value="AAD03749.1"/>
    <property type="molecule type" value="Genomic_DNA"/>
</dbReference>
<dbReference type="EMBL" id="AF113146">
    <property type="protein sequence ID" value="AAD03750.1"/>
    <property type="molecule type" value="Genomic_DNA"/>
</dbReference>
<dbReference type="EMBL" id="AF113147">
    <property type="protein sequence ID" value="AAD03751.1"/>
    <property type="molecule type" value="Genomic_DNA"/>
</dbReference>
<dbReference type="EMBL" id="AF113148">
    <property type="protein sequence ID" value="AAD03752.1"/>
    <property type="molecule type" value="Genomic_DNA"/>
</dbReference>
<dbReference type="EMBL" id="AF113149">
    <property type="protein sequence ID" value="AAD03753.1"/>
    <property type="molecule type" value="Genomic_DNA"/>
</dbReference>
<dbReference type="EMBL" id="AF113150">
    <property type="protein sequence ID" value="AAD03754.1"/>
    <property type="molecule type" value="Genomic_DNA"/>
</dbReference>
<dbReference type="EMBL" id="AF113151">
    <property type="protein sequence ID" value="AAD03755.1"/>
    <property type="molecule type" value="Genomic_DNA"/>
</dbReference>
<dbReference type="EMBL" id="AF113152">
    <property type="protein sequence ID" value="AAD03756.1"/>
    <property type="molecule type" value="Genomic_DNA"/>
</dbReference>
<dbReference type="EMBL" id="AF113153">
    <property type="protein sequence ID" value="AAD03757.1"/>
    <property type="molecule type" value="Genomic_DNA"/>
</dbReference>
<dbReference type="EMBL" id="AF113154">
    <property type="protein sequence ID" value="AAD03758.1"/>
    <property type="molecule type" value="Genomic_DNA"/>
</dbReference>
<dbReference type="EMBL" id="AF113155">
    <property type="protein sequence ID" value="AAD03759.1"/>
    <property type="molecule type" value="Genomic_DNA"/>
</dbReference>
<dbReference type="EMBL" id="AF113156">
    <property type="protein sequence ID" value="AAD03760.1"/>
    <property type="molecule type" value="Genomic_DNA"/>
</dbReference>
<dbReference type="EMBL" id="AF113157">
    <property type="protein sequence ID" value="AAD03761.1"/>
    <property type="molecule type" value="Genomic_DNA"/>
</dbReference>
<dbReference type="EMBL" id="AF113158">
    <property type="protein sequence ID" value="AAD03762.1"/>
    <property type="molecule type" value="Genomic_DNA"/>
</dbReference>
<dbReference type="EMBL" id="AF113159">
    <property type="protein sequence ID" value="AAD03763.1"/>
    <property type="molecule type" value="Genomic_DNA"/>
</dbReference>
<dbReference type="EMBL" id="AF113160">
    <property type="protein sequence ID" value="AAD03764.1"/>
    <property type="molecule type" value="Genomic_DNA"/>
</dbReference>
<dbReference type="EMBL" id="AF113161">
    <property type="protein sequence ID" value="AAD03765.1"/>
    <property type="molecule type" value="Genomic_DNA"/>
</dbReference>
<dbReference type="EMBL" id="AF113162">
    <property type="protein sequence ID" value="AAD03766.1"/>
    <property type="molecule type" value="Genomic_DNA"/>
</dbReference>
<dbReference type="EMBL" id="AF113163">
    <property type="protein sequence ID" value="AAD03767.1"/>
    <property type="molecule type" value="Genomic_DNA"/>
</dbReference>
<dbReference type="EMBL" id="AF113164">
    <property type="protein sequence ID" value="AAD03768.1"/>
    <property type="molecule type" value="Genomic_DNA"/>
</dbReference>
<dbReference type="EMBL" id="AF113165">
    <property type="protein sequence ID" value="AAD03769.1"/>
    <property type="molecule type" value="Genomic_DNA"/>
</dbReference>
<dbReference type="EMBL" id="AF113166">
    <property type="protein sequence ID" value="AAD03770.1"/>
    <property type="molecule type" value="Genomic_DNA"/>
</dbReference>
<dbReference type="EMBL" id="AF113167">
    <property type="protein sequence ID" value="AAD03771.1"/>
    <property type="molecule type" value="Genomic_DNA"/>
</dbReference>
<dbReference type="SMR" id="Q9TW89"/>
<dbReference type="ChEMBL" id="CHEMBL6077"/>
<dbReference type="EnsemblProtists" id="CAD51224">
    <property type="protein sequence ID" value="CAD51224"/>
    <property type="gene ID" value="PF3D7_0814900"/>
</dbReference>
<dbReference type="VEuPathDB" id="PlasmoDB:PF3D7_0814900"/>
<dbReference type="VEuPathDB" id="PlasmoDB:Pf7G8-2_000230200"/>
<dbReference type="VEuPathDB" id="PlasmoDB:Pf7G8_080019900"/>
<dbReference type="VEuPathDB" id="PlasmoDB:PfCD01_080020400"/>
<dbReference type="VEuPathDB" id="PlasmoDB:PfDd2_080020000"/>
<dbReference type="VEuPathDB" id="PlasmoDB:PfGA01_080018500"/>
<dbReference type="VEuPathDB" id="PlasmoDB:PfGB4_080019600"/>
<dbReference type="VEuPathDB" id="PlasmoDB:PfGN01_080020500"/>
<dbReference type="VEuPathDB" id="PlasmoDB:PfHB3_080020300"/>
<dbReference type="VEuPathDB" id="PlasmoDB:PfIT_080019800"/>
<dbReference type="VEuPathDB" id="PlasmoDB:PfKE01_080020400"/>
<dbReference type="VEuPathDB" id="PlasmoDB:PfKH01_080019900"/>
<dbReference type="VEuPathDB" id="PlasmoDB:PfKH02_080020400"/>
<dbReference type="VEuPathDB" id="PlasmoDB:PfML01_080020400"/>
<dbReference type="VEuPathDB" id="PlasmoDB:PfNF135_000021500"/>
<dbReference type="VEuPathDB" id="PlasmoDB:PfNF166_080018700"/>
<dbReference type="VEuPathDB" id="PlasmoDB:PfNF54_080018700"/>
<dbReference type="VEuPathDB" id="PlasmoDB:PfSD01_080020200"/>
<dbReference type="VEuPathDB" id="PlasmoDB:PfSN01_080019400"/>
<dbReference type="VEuPathDB" id="PlasmoDB:PfTG01_080020700"/>
<dbReference type="OMA" id="DSLINWD"/>
<dbReference type="GO" id="GO:0005737">
    <property type="term" value="C:cytoplasm"/>
    <property type="evidence" value="ECO:0007669"/>
    <property type="project" value="UniProtKB-SubCell"/>
</dbReference>
<dbReference type="GO" id="GO:0046872">
    <property type="term" value="F:metal ion binding"/>
    <property type="evidence" value="ECO:0007669"/>
    <property type="project" value="UniProtKB-KW"/>
</dbReference>
<dbReference type="GO" id="GO:0004784">
    <property type="term" value="F:superoxide dismutase activity"/>
    <property type="evidence" value="ECO:0007669"/>
    <property type="project" value="UniProtKB-EC"/>
</dbReference>
<dbReference type="FunFam" id="1.10.287.990:FF:000002">
    <property type="entry name" value="Superoxide dismutase"/>
    <property type="match status" value="1"/>
</dbReference>
<dbReference type="FunFam" id="3.55.40.20:FF:000001">
    <property type="entry name" value="Superoxide dismutase"/>
    <property type="match status" value="1"/>
</dbReference>
<dbReference type="Gene3D" id="1.10.287.990">
    <property type="entry name" value="Fe,Mn superoxide dismutase (SOD) domain"/>
    <property type="match status" value="1"/>
</dbReference>
<dbReference type="Gene3D" id="3.55.40.20">
    <property type="entry name" value="Iron/manganese superoxide dismutase, C-terminal domain"/>
    <property type="match status" value="1"/>
</dbReference>
<dbReference type="InterPro" id="IPR001189">
    <property type="entry name" value="Mn/Fe_SOD"/>
</dbReference>
<dbReference type="InterPro" id="IPR019833">
    <property type="entry name" value="Mn/Fe_SOD_BS"/>
</dbReference>
<dbReference type="InterPro" id="IPR019832">
    <property type="entry name" value="Mn/Fe_SOD_C"/>
</dbReference>
<dbReference type="InterPro" id="IPR019831">
    <property type="entry name" value="Mn/Fe_SOD_N"/>
</dbReference>
<dbReference type="InterPro" id="IPR036324">
    <property type="entry name" value="Mn/Fe_SOD_N_sf"/>
</dbReference>
<dbReference type="InterPro" id="IPR036314">
    <property type="entry name" value="SOD_C_sf"/>
</dbReference>
<dbReference type="PANTHER" id="PTHR42769">
    <property type="entry name" value="SUPEROXIDE DISMUTASE"/>
    <property type="match status" value="1"/>
</dbReference>
<dbReference type="PANTHER" id="PTHR42769:SF3">
    <property type="entry name" value="SUPEROXIDE DISMUTASE [FE] 2, CHLOROPLASTIC"/>
    <property type="match status" value="1"/>
</dbReference>
<dbReference type="Pfam" id="PF02777">
    <property type="entry name" value="Sod_Fe_C"/>
    <property type="match status" value="1"/>
</dbReference>
<dbReference type="Pfam" id="PF00081">
    <property type="entry name" value="Sod_Fe_N"/>
    <property type="match status" value="1"/>
</dbReference>
<dbReference type="PIRSF" id="PIRSF000349">
    <property type="entry name" value="SODismutase"/>
    <property type="match status" value="1"/>
</dbReference>
<dbReference type="PRINTS" id="PR01703">
    <property type="entry name" value="MNSODISMTASE"/>
</dbReference>
<dbReference type="SUPFAM" id="SSF54719">
    <property type="entry name" value="Fe,Mn superoxide dismutase (SOD), C-terminal domain"/>
    <property type="match status" value="1"/>
</dbReference>
<dbReference type="SUPFAM" id="SSF46609">
    <property type="entry name" value="Fe,Mn superoxide dismutase (SOD), N-terminal domain"/>
    <property type="match status" value="1"/>
</dbReference>
<dbReference type="PROSITE" id="PS00088">
    <property type="entry name" value="SOD_MN"/>
    <property type="match status" value="1"/>
</dbReference>
<evidence type="ECO:0000250" key="1"/>
<evidence type="ECO:0000305" key="2"/>
<protein>
    <recommendedName>
        <fullName>Superoxide dismutase [Fe]</fullName>
        <ecNumber>1.15.1.1</ecNumber>
    </recommendedName>
    <alternativeName>
        <fullName>FeSOD</fullName>
    </alternativeName>
</protein>
<comment type="function">
    <text evidence="1">Destroys superoxide anion radicals which are normally produced within the cells and which are toxic to biological systems.</text>
</comment>
<comment type="catalytic activity">
    <reaction>
        <text>2 superoxide + 2 H(+) = H2O2 + O2</text>
        <dbReference type="Rhea" id="RHEA:20696"/>
        <dbReference type="ChEBI" id="CHEBI:15378"/>
        <dbReference type="ChEBI" id="CHEBI:15379"/>
        <dbReference type="ChEBI" id="CHEBI:16240"/>
        <dbReference type="ChEBI" id="CHEBI:18421"/>
        <dbReference type="EC" id="1.15.1.1"/>
    </reaction>
</comment>
<comment type="cofactor">
    <cofactor evidence="1">
        <name>Fe cation</name>
        <dbReference type="ChEBI" id="CHEBI:24875"/>
    </cofactor>
    <text evidence="1">Binds 1 Fe cation per subunit.</text>
</comment>
<comment type="subunit">
    <text evidence="1">Homodimer.</text>
</comment>
<comment type="subcellular location">
    <subcellularLocation>
        <location evidence="2">Cytoplasm</location>
    </subcellularLocation>
</comment>
<comment type="similarity">
    <text evidence="2">Belongs to the iron/manganese superoxide dismutase family.</text>
</comment>
<feature type="chain" id="PRO_0000290111" description="Superoxide dismutase [Fe]">
    <location>
        <begin position="1"/>
        <end position="198"/>
    </location>
</feature>
<feature type="binding site" evidence="1">
    <location>
        <position position="27"/>
    </location>
    <ligand>
        <name>Fe cation</name>
        <dbReference type="ChEBI" id="CHEBI:24875"/>
    </ligand>
</feature>
<feature type="binding site" evidence="1">
    <location>
        <position position="74"/>
    </location>
    <ligand>
        <name>Fe cation</name>
        <dbReference type="ChEBI" id="CHEBI:24875"/>
    </ligand>
</feature>
<feature type="binding site" evidence="1">
    <location>
        <position position="158"/>
    </location>
    <ligand>
        <name>Fe cation</name>
        <dbReference type="ChEBI" id="CHEBI:24875"/>
    </ligand>
</feature>
<feature type="binding site" evidence="1">
    <location>
        <position position="162"/>
    </location>
    <ligand>
        <name>Fe cation</name>
        <dbReference type="ChEBI" id="CHEBI:24875"/>
    </ligand>
</feature>
<feature type="sequence variant" description="In strain: isolate Gabon 25.">
    <original>I</original>
    <variation>V</variation>
    <location>
        <position position="19"/>
    </location>
</feature>
<feature type="sequence variant" description="In strain: isolate Gabon 24.">
    <original>S</original>
    <variation>G</variation>
    <location>
        <position position="20"/>
    </location>
</feature>
<feature type="sequence variant" description="In strain: isolate Gabon 23.">
    <original>L</original>
    <variation>I</variation>
    <location>
        <position position="24"/>
    </location>
</feature>
<feature type="sequence variant" description="In strain: isolate Gabon 20.">
    <original>D</original>
    <variation>G</variation>
    <location>
        <position position="84"/>
    </location>
</feature>
<feature type="sequence variant" description="In strain: isolate Gabon 21.">
    <original>K</original>
    <variation>E</variation>
    <location>
        <position position="108"/>
    </location>
</feature>
<feature type="sequence variant" description="In strain: isolate Gabon 21.">
    <original>V</original>
    <variation>A</variation>
    <location>
        <position position="135"/>
    </location>
</feature>
<feature type="sequence variant" description="In strain: isolate Gabon 20.">
    <original>G</original>
    <variation>S</variation>
    <location>
        <position position="151"/>
    </location>
</feature>
<feature type="sequence variant" description="In strain: isolate Gabon 26.">
    <original>I</original>
    <variation>T</variation>
    <location>
        <position position="166"/>
    </location>
</feature>
<feature type="sequence variant" description="In strain: isolate Gabon 22.">
    <original>D</original>
    <variation>N</variation>
    <location>
        <position position="167"/>
    </location>
</feature>
<name>SODF_PLAFA</name>
<reference key="1">
    <citation type="journal article" date="1999" name="FEMS Microbiol. Lett.">
        <title>Analysis of genetic diversity at the iron-containing superoxide dismutase locus in Plasmodium falciparum wild isolates.</title>
        <authorList>
            <person name="Baert C.B."/>
            <person name="Deloron P."/>
            <person name="Viscogliosi E."/>
            <person name="Dauchez M."/>
            <person name="Camus D."/>
            <person name="Dive D."/>
        </authorList>
    </citation>
    <scope>NUCLEOTIDE SEQUENCE [GENOMIC DNA]</scope>
    <source>
        <strain>Isolate Gabon 1</strain>
        <strain>Isolate Gabon 10</strain>
        <strain>Isolate Gabon 11</strain>
        <strain>Isolate Gabon 12</strain>
        <strain>Isolate Gabon 13</strain>
        <strain>Isolate Gabon 14</strain>
        <strain>Isolate Gabon 15</strain>
        <strain>Isolate Gabon 16</strain>
        <strain>Isolate Gabon 17</strain>
        <strain>Isolate Gabon 18</strain>
        <strain>Isolate Gabon 19</strain>
        <strain>Isolate Gabon 2</strain>
        <strain>Isolate Gabon 20</strain>
        <strain>Isolate Gabon 21</strain>
        <strain>Isolate Gabon 22</strain>
        <strain>Isolate Gabon 23</strain>
        <strain>Isolate Gabon 24</strain>
        <strain>Isolate Gabon 25</strain>
        <strain>Isolate Gabon 26</strain>
        <strain>Isolate Gabon 3</strain>
        <strain>Isolate Gabon 4</strain>
        <strain>Isolate Gabon 5</strain>
        <strain>Isolate Gabon 6</strain>
        <strain>Isolate Gabon 7</strain>
        <strain>Isolate Gabon 8</strain>
        <strain>Isolate Gabon 9</strain>
    </source>
</reference>
<proteinExistence type="inferred from homology"/>
<gene>
    <name type="primary">SODB</name>
</gene>
<keyword id="KW-0963">Cytoplasm</keyword>
<keyword id="KW-0408">Iron</keyword>
<keyword id="KW-0479">Metal-binding</keyword>
<keyword id="KW-0560">Oxidoreductase</keyword>
<sequence>MVITLPKLKYALNALSPHISEETLNFHYNKHHAGYVNKLNTLIKDTPFAEKSLLDIVKESSGAIFNNAAQIWNHTFYWDSMGPDCGGEPHGEIKEKIQEDFGSFNNFKEQFSNILCGHFGSGWGWLALNNNNKLVILQTHDAGNPIKDNTGIPILTCDIWEHAYYIDYRNDRASYVKAWWNLVNWNFANENLKKAMQK</sequence>